<reference key="1">
    <citation type="journal article" date="2000" name="Nature">
        <title>Complete DNA sequence of a serogroup A strain of Neisseria meningitidis Z2491.</title>
        <authorList>
            <person name="Parkhill J."/>
            <person name="Achtman M."/>
            <person name="James K.D."/>
            <person name="Bentley S.D."/>
            <person name="Churcher C.M."/>
            <person name="Klee S.R."/>
            <person name="Morelli G."/>
            <person name="Basham D."/>
            <person name="Brown D."/>
            <person name="Chillingworth T."/>
            <person name="Davies R.M."/>
            <person name="Davis P."/>
            <person name="Devlin K."/>
            <person name="Feltwell T."/>
            <person name="Hamlin N."/>
            <person name="Holroyd S."/>
            <person name="Jagels K."/>
            <person name="Leather S."/>
            <person name="Moule S."/>
            <person name="Mungall K.L."/>
            <person name="Quail M.A."/>
            <person name="Rajandream M.A."/>
            <person name="Rutherford K.M."/>
            <person name="Simmonds M."/>
            <person name="Skelton J."/>
            <person name="Whitehead S."/>
            <person name="Spratt B.G."/>
            <person name="Barrell B.G."/>
        </authorList>
    </citation>
    <scope>NUCLEOTIDE SEQUENCE [LARGE SCALE GENOMIC DNA]</scope>
    <source>
        <strain>DSM 15465 / Z2491</strain>
    </source>
</reference>
<organism>
    <name type="scientific">Neisseria meningitidis serogroup A / serotype 4A (strain DSM 15465 / Z2491)</name>
    <dbReference type="NCBI Taxonomy" id="122587"/>
    <lineage>
        <taxon>Bacteria</taxon>
        <taxon>Pseudomonadati</taxon>
        <taxon>Pseudomonadota</taxon>
        <taxon>Betaproteobacteria</taxon>
        <taxon>Neisseriales</taxon>
        <taxon>Neisseriaceae</taxon>
        <taxon>Neisseria</taxon>
    </lineage>
</organism>
<comment type="catalytic activity">
    <reaction evidence="2">
        <text>5-phospho-beta-D-ribosylamine + glycine + ATP = N(1)-(5-phospho-beta-D-ribosyl)glycinamide + ADP + phosphate + H(+)</text>
        <dbReference type="Rhea" id="RHEA:17453"/>
        <dbReference type="ChEBI" id="CHEBI:15378"/>
        <dbReference type="ChEBI" id="CHEBI:30616"/>
        <dbReference type="ChEBI" id="CHEBI:43474"/>
        <dbReference type="ChEBI" id="CHEBI:57305"/>
        <dbReference type="ChEBI" id="CHEBI:58681"/>
        <dbReference type="ChEBI" id="CHEBI:143788"/>
        <dbReference type="ChEBI" id="CHEBI:456216"/>
        <dbReference type="EC" id="6.3.4.13"/>
    </reaction>
</comment>
<comment type="cofactor">
    <cofactor evidence="1">
        <name>Mg(2+)</name>
        <dbReference type="ChEBI" id="CHEBI:18420"/>
    </cofactor>
    <cofactor evidence="1">
        <name>Mn(2+)</name>
        <dbReference type="ChEBI" id="CHEBI:29035"/>
    </cofactor>
    <text evidence="1">Binds 1 Mg(2+) or Mn(2+) ion per subunit.</text>
</comment>
<comment type="pathway">
    <text evidence="2">Purine metabolism; IMP biosynthesis via de novo pathway; N(1)-(5-phospho-D-ribosyl)glycinamide from 5-phospho-alpha-D-ribose 1-diphosphate: step 2/2.</text>
</comment>
<comment type="similarity">
    <text evidence="2">Belongs to the GARS family.</text>
</comment>
<dbReference type="EC" id="6.3.4.13" evidence="2"/>
<dbReference type="EMBL" id="AL157959">
    <property type="protein sequence ID" value="CAM07544.1"/>
    <property type="molecule type" value="Genomic_DNA"/>
</dbReference>
<dbReference type="PIR" id="B82018">
    <property type="entry name" value="B82018"/>
</dbReference>
<dbReference type="RefSeq" id="WP_002246568.1">
    <property type="nucleotide sequence ID" value="NC_003116.1"/>
</dbReference>
<dbReference type="SMR" id="Q9JWU6"/>
<dbReference type="EnsemblBacteria" id="CAM07544">
    <property type="protein sequence ID" value="CAM07544"/>
    <property type="gene ID" value="NMA0238"/>
</dbReference>
<dbReference type="GeneID" id="93387111"/>
<dbReference type="KEGG" id="nma:NMA0238"/>
<dbReference type="HOGENOM" id="CLU_027420_3_1_4"/>
<dbReference type="UniPathway" id="UPA00074">
    <property type="reaction ID" value="UER00125"/>
</dbReference>
<dbReference type="Proteomes" id="UP000000626">
    <property type="component" value="Chromosome"/>
</dbReference>
<dbReference type="GO" id="GO:0005524">
    <property type="term" value="F:ATP binding"/>
    <property type="evidence" value="ECO:0007669"/>
    <property type="project" value="UniProtKB-KW"/>
</dbReference>
<dbReference type="GO" id="GO:0046872">
    <property type="term" value="F:metal ion binding"/>
    <property type="evidence" value="ECO:0007669"/>
    <property type="project" value="UniProtKB-KW"/>
</dbReference>
<dbReference type="GO" id="GO:0004637">
    <property type="term" value="F:phosphoribosylamine-glycine ligase activity"/>
    <property type="evidence" value="ECO:0007669"/>
    <property type="project" value="UniProtKB-UniRule"/>
</dbReference>
<dbReference type="GO" id="GO:0006189">
    <property type="term" value="P:'de novo' IMP biosynthetic process"/>
    <property type="evidence" value="ECO:0007669"/>
    <property type="project" value="UniProtKB-UniRule"/>
</dbReference>
<dbReference type="GO" id="GO:0009113">
    <property type="term" value="P:purine nucleobase biosynthetic process"/>
    <property type="evidence" value="ECO:0007669"/>
    <property type="project" value="InterPro"/>
</dbReference>
<dbReference type="FunFam" id="3.30.470.20:FF:000031">
    <property type="entry name" value="Phosphoribosylamine--glycine ligase"/>
    <property type="match status" value="1"/>
</dbReference>
<dbReference type="FunFam" id="3.40.50.20:FF:000006">
    <property type="entry name" value="Phosphoribosylamine--glycine ligase, chloroplastic"/>
    <property type="match status" value="1"/>
</dbReference>
<dbReference type="FunFam" id="3.30.1490.20:FF:000006">
    <property type="entry name" value="phosphoribosylamine--glycine ligase, chloroplastic-like"/>
    <property type="match status" value="1"/>
</dbReference>
<dbReference type="FunFam" id="3.90.600.10:FF:000001">
    <property type="entry name" value="Trifunctional purine biosynthetic protein adenosine-3"/>
    <property type="match status" value="1"/>
</dbReference>
<dbReference type="Gene3D" id="3.40.50.20">
    <property type="match status" value="1"/>
</dbReference>
<dbReference type="Gene3D" id="3.30.1490.20">
    <property type="entry name" value="ATP-grasp fold, A domain"/>
    <property type="match status" value="1"/>
</dbReference>
<dbReference type="Gene3D" id="3.30.470.20">
    <property type="entry name" value="ATP-grasp fold, B domain"/>
    <property type="match status" value="1"/>
</dbReference>
<dbReference type="Gene3D" id="3.90.600.10">
    <property type="entry name" value="Phosphoribosylglycinamide synthetase, C-terminal domain"/>
    <property type="match status" value="1"/>
</dbReference>
<dbReference type="HAMAP" id="MF_00138">
    <property type="entry name" value="GARS"/>
    <property type="match status" value="1"/>
</dbReference>
<dbReference type="InterPro" id="IPR011761">
    <property type="entry name" value="ATP-grasp"/>
</dbReference>
<dbReference type="InterPro" id="IPR013815">
    <property type="entry name" value="ATP_grasp_subdomain_1"/>
</dbReference>
<dbReference type="InterPro" id="IPR016185">
    <property type="entry name" value="PreATP-grasp_dom_sf"/>
</dbReference>
<dbReference type="InterPro" id="IPR020561">
    <property type="entry name" value="PRibGlycinamid_synth_ATP-grasp"/>
</dbReference>
<dbReference type="InterPro" id="IPR000115">
    <property type="entry name" value="PRibGlycinamide_synth"/>
</dbReference>
<dbReference type="InterPro" id="IPR020560">
    <property type="entry name" value="PRibGlycinamide_synth_C-dom"/>
</dbReference>
<dbReference type="InterPro" id="IPR037123">
    <property type="entry name" value="PRibGlycinamide_synth_C_sf"/>
</dbReference>
<dbReference type="InterPro" id="IPR020559">
    <property type="entry name" value="PRibGlycinamide_synth_CS"/>
</dbReference>
<dbReference type="InterPro" id="IPR020562">
    <property type="entry name" value="PRibGlycinamide_synth_N"/>
</dbReference>
<dbReference type="InterPro" id="IPR011054">
    <property type="entry name" value="Rudment_hybrid_motif"/>
</dbReference>
<dbReference type="NCBIfam" id="TIGR00877">
    <property type="entry name" value="purD"/>
    <property type="match status" value="1"/>
</dbReference>
<dbReference type="PANTHER" id="PTHR43472">
    <property type="entry name" value="PHOSPHORIBOSYLAMINE--GLYCINE LIGASE"/>
    <property type="match status" value="1"/>
</dbReference>
<dbReference type="PANTHER" id="PTHR43472:SF1">
    <property type="entry name" value="PHOSPHORIBOSYLAMINE--GLYCINE LIGASE, CHLOROPLASTIC"/>
    <property type="match status" value="1"/>
</dbReference>
<dbReference type="Pfam" id="PF01071">
    <property type="entry name" value="GARS_A"/>
    <property type="match status" value="1"/>
</dbReference>
<dbReference type="Pfam" id="PF02843">
    <property type="entry name" value="GARS_C"/>
    <property type="match status" value="1"/>
</dbReference>
<dbReference type="Pfam" id="PF02844">
    <property type="entry name" value="GARS_N"/>
    <property type="match status" value="1"/>
</dbReference>
<dbReference type="SMART" id="SM01209">
    <property type="entry name" value="GARS_A"/>
    <property type="match status" value="1"/>
</dbReference>
<dbReference type="SMART" id="SM01210">
    <property type="entry name" value="GARS_C"/>
    <property type="match status" value="1"/>
</dbReference>
<dbReference type="SUPFAM" id="SSF56059">
    <property type="entry name" value="Glutathione synthetase ATP-binding domain-like"/>
    <property type="match status" value="1"/>
</dbReference>
<dbReference type="SUPFAM" id="SSF52440">
    <property type="entry name" value="PreATP-grasp domain"/>
    <property type="match status" value="1"/>
</dbReference>
<dbReference type="SUPFAM" id="SSF51246">
    <property type="entry name" value="Rudiment single hybrid motif"/>
    <property type="match status" value="1"/>
</dbReference>
<dbReference type="PROSITE" id="PS50975">
    <property type="entry name" value="ATP_GRASP"/>
    <property type="match status" value="1"/>
</dbReference>
<dbReference type="PROSITE" id="PS00184">
    <property type="entry name" value="GARS"/>
    <property type="match status" value="1"/>
</dbReference>
<proteinExistence type="inferred from homology"/>
<name>PUR2_NEIMA</name>
<keyword id="KW-0067">ATP-binding</keyword>
<keyword id="KW-0436">Ligase</keyword>
<keyword id="KW-0460">Magnesium</keyword>
<keyword id="KW-0464">Manganese</keyword>
<keyword id="KW-0479">Metal-binding</keyword>
<keyword id="KW-0547">Nucleotide-binding</keyword>
<keyword id="KW-0658">Purine biosynthesis</keyword>
<evidence type="ECO:0000250" key="1"/>
<evidence type="ECO:0000255" key="2">
    <source>
        <dbReference type="HAMAP-Rule" id="MF_00138"/>
    </source>
</evidence>
<protein>
    <recommendedName>
        <fullName evidence="2">Phosphoribosylamine--glycine ligase</fullName>
        <ecNumber evidence="2">6.3.4.13</ecNumber>
    </recommendedName>
    <alternativeName>
        <fullName evidence="2">GARS</fullName>
    </alternativeName>
    <alternativeName>
        <fullName evidence="2">Glycinamide ribonucleotide synthetase</fullName>
    </alternativeName>
    <alternativeName>
        <fullName evidence="2">Phosphoribosylglycinamide synthetase</fullName>
    </alternativeName>
</protein>
<sequence length="423" mass="44907">MKLLVIGNGGREHALAWKLAQSPKVETVFVAPGNAGTAIEPKLQNIDLTAHQDLIEFCRKENIVFTVVGPEAPLAAGVVDDFRAAGLKIFGPTQYAAQLESSKDFAKAFMAKYNIPTAQYQTFENADAAHDYVNQKGAPIVIKADGLAAGKGVIVAMTLDEAHAAIDDMLLDNKMGNAGARVVIEDFLQGEEASFIVMVDGNNVLPMATSQDHKRLLDGDKGLNTGGMGAYSPAPVVTPVVYERAMNEIILPTVAGMKAEGHEFTGFLYAGLMIDQSGAPHTIEFNCRFGDPETQPIMSRLNSDLSDLVEAAIDGKLDSVTAEWSPQTAVGVVLAAQNYPETPKKGDVISGLDAANQVGKVFHAGTTANEKGDVLTNGGRVLCVVGLGDNVAQAKAKAYGALEKISFDGMQYRKDIADKAINR</sequence>
<gene>
    <name evidence="2" type="primary">purD</name>
    <name type="ordered locus">NMA0238</name>
</gene>
<feature type="chain" id="PRO_0000151466" description="Phosphoribosylamine--glycine ligase">
    <location>
        <begin position="1"/>
        <end position="423"/>
    </location>
</feature>
<feature type="domain" description="ATP-grasp" evidence="2">
    <location>
        <begin position="107"/>
        <end position="314"/>
    </location>
</feature>
<feature type="binding site" evidence="2">
    <location>
        <begin position="133"/>
        <end position="194"/>
    </location>
    <ligand>
        <name>ATP</name>
        <dbReference type="ChEBI" id="CHEBI:30616"/>
    </ligand>
</feature>
<feature type="binding site" evidence="2">
    <location>
        <position position="284"/>
    </location>
    <ligand>
        <name>Mg(2+)</name>
        <dbReference type="ChEBI" id="CHEBI:18420"/>
    </ligand>
</feature>
<feature type="binding site" evidence="2">
    <location>
        <position position="286"/>
    </location>
    <ligand>
        <name>Mg(2+)</name>
        <dbReference type="ChEBI" id="CHEBI:18420"/>
    </ligand>
</feature>
<accession>Q9JWU6</accession>
<accession>A1IP84</accession>